<comment type="function">
    <text evidence="2">Cell wall formation.</text>
</comment>
<comment type="catalytic activity">
    <reaction evidence="2">
        <text>2 D-alanine + ATP = D-alanyl-D-alanine + ADP + phosphate + H(+)</text>
        <dbReference type="Rhea" id="RHEA:11224"/>
        <dbReference type="ChEBI" id="CHEBI:15378"/>
        <dbReference type="ChEBI" id="CHEBI:30616"/>
        <dbReference type="ChEBI" id="CHEBI:43474"/>
        <dbReference type="ChEBI" id="CHEBI:57416"/>
        <dbReference type="ChEBI" id="CHEBI:57822"/>
        <dbReference type="ChEBI" id="CHEBI:456216"/>
        <dbReference type="EC" id="6.3.2.4"/>
    </reaction>
</comment>
<comment type="cofactor">
    <cofactor evidence="1">
        <name>Mg(2+)</name>
        <dbReference type="ChEBI" id="CHEBI:18420"/>
    </cofactor>
    <cofactor evidence="1">
        <name>Mn(2+)</name>
        <dbReference type="ChEBI" id="CHEBI:29035"/>
    </cofactor>
    <text evidence="1">Binds 2 magnesium or manganese ions per subunit.</text>
</comment>
<comment type="pathway">
    <text evidence="2">Cell wall biogenesis; peptidoglycan biosynthesis.</text>
</comment>
<comment type="subcellular location">
    <subcellularLocation>
        <location evidence="2">Cytoplasm</location>
    </subcellularLocation>
</comment>
<comment type="similarity">
    <text evidence="2">Belongs to the D-alanine--D-alanine ligase family.</text>
</comment>
<name>DDL_PELPB</name>
<sequence>MPRITVALIFGGRSTEHEISIISAKSIAANISAERYKVIPLYITHQGTWLCEGIARDILNLDLSALLRNSSPEAAAMALDRMVEEAEQKPFNLDFRAIGIEVAFLTLHGTYGEDGRIQGFLDTCNIPYTGCGVLASALTMDKALTKLCVADAGIAVAPSITLLSAEYHADTEKVHSRIEEKFIYPFFVKPANLGSSIGISKVHHREQLPAALKSACSLDSKIVVEKAITGREIEVAVLGNDEPEVSVCGEIEPGSDFYDYHDKYIHNSAKLFIPARIPDEMQSEVRSIALKAYKALGCRGMSRIDFFVDEKRGTIVLNEVNTIPGFTDISMFPRLMAASGHSFPELAERLLQLALETLRP</sequence>
<keyword id="KW-0067">ATP-binding</keyword>
<keyword id="KW-0133">Cell shape</keyword>
<keyword id="KW-0961">Cell wall biogenesis/degradation</keyword>
<keyword id="KW-0963">Cytoplasm</keyword>
<keyword id="KW-0436">Ligase</keyword>
<keyword id="KW-0460">Magnesium</keyword>
<keyword id="KW-0464">Manganese</keyword>
<keyword id="KW-0479">Metal-binding</keyword>
<keyword id="KW-0547">Nucleotide-binding</keyword>
<keyword id="KW-0573">Peptidoglycan synthesis</keyword>
<keyword id="KW-1185">Reference proteome</keyword>
<dbReference type="EC" id="6.3.2.4" evidence="2"/>
<dbReference type="EMBL" id="CP001110">
    <property type="protein sequence ID" value="ACF43868.1"/>
    <property type="molecule type" value="Genomic_DNA"/>
</dbReference>
<dbReference type="RefSeq" id="WP_012508355.1">
    <property type="nucleotide sequence ID" value="NC_011060.1"/>
</dbReference>
<dbReference type="SMR" id="B4SAI2"/>
<dbReference type="STRING" id="324925.Ppha_1631"/>
<dbReference type="KEGG" id="pph:Ppha_1631"/>
<dbReference type="eggNOG" id="COG1181">
    <property type="taxonomic scope" value="Bacteria"/>
</dbReference>
<dbReference type="HOGENOM" id="CLU_039268_0_0_10"/>
<dbReference type="OrthoDB" id="9813261at2"/>
<dbReference type="UniPathway" id="UPA00219"/>
<dbReference type="Proteomes" id="UP000002724">
    <property type="component" value="Chromosome"/>
</dbReference>
<dbReference type="GO" id="GO:0005829">
    <property type="term" value="C:cytosol"/>
    <property type="evidence" value="ECO:0007669"/>
    <property type="project" value="TreeGrafter"/>
</dbReference>
<dbReference type="GO" id="GO:0005524">
    <property type="term" value="F:ATP binding"/>
    <property type="evidence" value="ECO:0007669"/>
    <property type="project" value="UniProtKB-KW"/>
</dbReference>
<dbReference type="GO" id="GO:0008716">
    <property type="term" value="F:D-alanine-D-alanine ligase activity"/>
    <property type="evidence" value="ECO:0007669"/>
    <property type="project" value="UniProtKB-UniRule"/>
</dbReference>
<dbReference type="GO" id="GO:0046872">
    <property type="term" value="F:metal ion binding"/>
    <property type="evidence" value="ECO:0007669"/>
    <property type="project" value="UniProtKB-KW"/>
</dbReference>
<dbReference type="GO" id="GO:0071555">
    <property type="term" value="P:cell wall organization"/>
    <property type="evidence" value="ECO:0007669"/>
    <property type="project" value="UniProtKB-KW"/>
</dbReference>
<dbReference type="GO" id="GO:0009252">
    <property type="term" value="P:peptidoglycan biosynthetic process"/>
    <property type="evidence" value="ECO:0007669"/>
    <property type="project" value="UniProtKB-UniRule"/>
</dbReference>
<dbReference type="GO" id="GO:0008360">
    <property type="term" value="P:regulation of cell shape"/>
    <property type="evidence" value="ECO:0007669"/>
    <property type="project" value="UniProtKB-KW"/>
</dbReference>
<dbReference type="FunFam" id="3.30.1490.20:FF:000007">
    <property type="entry name" value="D-alanine--D-alanine ligase"/>
    <property type="match status" value="1"/>
</dbReference>
<dbReference type="FunFam" id="3.30.470.20:FF:000008">
    <property type="entry name" value="D-alanine--D-alanine ligase"/>
    <property type="match status" value="1"/>
</dbReference>
<dbReference type="Gene3D" id="3.40.50.20">
    <property type="match status" value="1"/>
</dbReference>
<dbReference type="Gene3D" id="3.30.1490.20">
    <property type="entry name" value="ATP-grasp fold, A domain"/>
    <property type="match status" value="1"/>
</dbReference>
<dbReference type="Gene3D" id="3.30.470.20">
    <property type="entry name" value="ATP-grasp fold, B domain"/>
    <property type="match status" value="1"/>
</dbReference>
<dbReference type="HAMAP" id="MF_00047">
    <property type="entry name" value="Dala_Dala_lig"/>
    <property type="match status" value="1"/>
</dbReference>
<dbReference type="InterPro" id="IPR011761">
    <property type="entry name" value="ATP-grasp"/>
</dbReference>
<dbReference type="InterPro" id="IPR013815">
    <property type="entry name" value="ATP_grasp_subdomain_1"/>
</dbReference>
<dbReference type="InterPro" id="IPR000291">
    <property type="entry name" value="D-Ala_lig_Van_CS"/>
</dbReference>
<dbReference type="InterPro" id="IPR005905">
    <property type="entry name" value="D_ala_D_ala"/>
</dbReference>
<dbReference type="InterPro" id="IPR011095">
    <property type="entry name" value="Dala_Dala_lig_C"/>
</dbReference>
<dbReference type="InterPro" id="IPR011127">
    <property type="entry name" value="Dala_Dala_lig_N"/>
</dbReference>
<dbReference type="InterPro" id="IPR016185">
    <property type="entry name" value="PreATP-grasp_dom_sf"/>
</dbReference>
<dbReference type="NCBIfam" id="TIGR01205">
    <property type="entry name" value="D_ala_D_alaTIGR"/>
    <property type="match status" value="1"/>
</dbReference>
<dbReference type="NCBIfam" id="NF002378">
    <property type="entry name" value="PRK01372.1"/>
    <property type="match status" value="1"/>
</dbReference>
<dbReference type="NCBIfam" id="NF002528">
    <property type="entry name" value="PRK01966.1-4"/>
    <property type="match status" value="1"/>
</dbReference>
<dbReference type="PANTHER" id="PTHR23132">
    <property type="entry name" value="D-ALANINE--D-ALANINE LIGASE"/>
    <property type="match status" value="1"/>
</dbReference>
<dbReference type="PANTHER" id="PTHR23132:SF25">
    <property type="entry name" value="D-ALANINE--D-ALANINE LIGASE A"/>
    <property type="match status" value="1"/>
</dbReference>
<dbReference type="Pfam" id="PF07478">
    <property type="entry name" value="Dala_Dala_lig_C"/>
    <property type="match status" value="1"/>
</dbReference>
<dbReference type="Pfam" id="PF01820">
    <property type="entry name" value="Dala_Dala_lig_N"/>
    <property type="match status" value="1"/>
</dbReference>
<dbReference type="PIRSF" id="PIRSF039102">
    <property type="entry name" value="Ddl/VanB"/>
    <property type="match status" value="1"/>
</dbReference>
<dbReference type="SUPFAM" id="SSF56059">
    <property type="entry name" value="Glutathione synthetase ATP-binding domain-like"/>
    <property type="match status" value="1"/>
</dbReference>
<dbReference type="SUPFAM" id="SSF52440">
    <property type="entry name" value="PreATP-grasp domain"/>
    <property type="match status" value="1"/>
</dbReference>
<dbReference type="PROSITE" id="PS50975">
    <property type="entry name" value="ATP_GRASP"/>
    <property type="match status" value="1"/>
</dbReference>
<dbReference type="PROSITE" id="PS00843">
    <property type="entry name" value="DALA_DALA_LIGASE_1"/>
    <property type="match status" value="1"/>
</dbReference>
<dbReference type="PROSITE" id="PS00844">
    <property type="entry name" value="DALA_DALA_LIGASE_2"/>
    <property type="match status" value="1"/>
</dbReference>
<feature type="chain" id="PRO_1000091200" description="D-alanine--D-alanine ligase">
    <location>
        <begin position="1"/>
        <end position="360"/>
    </location>
</feature>
<feature type="domain" description="ATP-grasp" evidence="2">
    <location>
        <begin position="146"/>
        <end position="352"/>
    </location>
</feature>
<feature type="binding site" evidence="2">
    <location>
        <begin position="179"/>
        <end position="234"/>
    </location>
    <ligand>
        <name>ATP</name>
        <dbReference type="ChEBI" id="CHEBI:30616"/>
    </ligand>
</feature>
<feature type="binding site" evidence="2">
    <location>
        <position position="305"/>
    </location>
    <ligand>
        <name>Mg(2+)</name>
        <dbReference type="ChEBI" id="CHEBI:18420"/>
        <label>1</label>
    </ligand>
</feature>
<feature type="binding site" evidence="2">
    <location>
        <position position="319"/>
    </location>
    <ligand>
        <name>Mg(2+)</name>
        <dbReference type="ChEBI" id="CHEBI:18420"/>
        <label>1</label>
    </ligand>
</feature>
<feature type="binding site" evidence="2">
    <location>
        <position position="319"/>
    </location>
    <ligand>
        <name>Mg(2+)</name>
        <dbReference type="ChEBI" id="CHEBI:18420"/>
        <label>2</label>
    </ligand>
</feature>
<feature type="binding site" evidence="2">
    <location>
        <position position="321"/>
    </location>
    <ligand>
        <name>Mg(2+)</name>
        <dbReference type="ChEBI" id="CHEBI:18420"/>
        <label>2</label>
    </ligand>
</feature>
<gene>
    <name evidence="2" type="primary">ddl</name>
    <name type="ordered locus">Ppha_1631</name>
</gene>
<protein>
    <recommendedName>
        <fullName evidence="2">D-alanine--D-alanine ligase</fullName>
        <ecNumber evidence="2">6.3.2.4</ecNumber>
    </recommendedName>
    <alternativeName>
        <fullName evidence="2">D-Ala-D-Ala ligase</fullName>
    </alternativeName>
    <alternativeName>
        <fullName evidence="2">D-alanylalanine synthetase</fullName>
    </alternativeName>
</protein>
<reference key="1">
    <citation type="submission" date="2008-06" db="EMBL/GenBank/DDBJ databases">
        <title>Complete sequence of Pelodictyon phaeoclathratiforme BU-1.</title>
        <authorList>
            <consortium name="US DOE Joint Genome Institute"/>
            <person name="Lucas S."/>
            <person name="Copeland A."/>
            <person name="Lapidus A."/>
            <person name="Glavina del Rio T."/>
            <person name="Dalin E."/>
            <person name="Tice H."/>
            <person name="Bruce D."/>
            <person name="Goodwin L."/>
            <person name="Pitluck S."/>
            <person name="Schmutz J."/>
            <person name="Larimer F."/>
            <person name="Land M."/>
            <person name="Hauser L."/>
            <person name="Kyrpides N."/>
            <person name="Mikhailova N."/>
            <person name="Liu Z."/>
            <person name="Li T."/>
            <person name="Zhao F."/>
            <person name="Overmann J."/>
            <person name="Bryant D.A."/>
            <person name="Richardson P."/>
        </authorList>
    </citation>
    <scope>NUCLEOTIDE SEQUENCE [LARGE SCALE GENOMIC DNA]</scope>
    <source>
        <strain>DSM 5477 / BU-1</strain>
    </source>
</reference>
<evidence type="ECO:0000250" key="1"/>
<evidence type="ECO:0000255" key="2">
    <source>
        <dbReference type="HAMAP-Rule" id="MF_00047"/>
    </source>
</evidence>
<proteinExistence type="inferred from homology"/>
<organism>
    <name type="scientific">Pelodictyon phaeoclathratiforme (strain DSM 5477 / BU-1)</name>
    <dbReference type="NCBI Taxonomy" id="324925"/>
    <lineage>
        <taxon>Bacteria</taxon>
        <taxon>Pseudomonadati</taxon>
        <taxon>Chlorobiota</taxon>
        <taxon>Chlorobiia</taxon>
        <taxon>Chlorobiales</taxon>
        <taxon>Chlorobiaceae</taxon>
        <taxon>Chlorobium/Pelodictyon group</taxon>
        <taxon>Pelodictyon</taxon>
    </lineage>
</organism>
<accession>B4SAI2</accession>